<feature type="chain" id="PRO_0000265398" description="Small ribosomal subunit protein uS19">
    <location>
        <begin position="1"/>
        <end position="92"/>
    </location>
</feature>
<name>RS19_PROM9</name>
<protein>
    <recommendedName>
        <fullName evidence="1">Small ribosomal subunit protein uS19</fullName>
    </recommendedName>
    <alternativeName>
        <fullName evidence="2">30S ribosomal protein S19</fullName>
    </alternativeName>
</protein>
<evidence type="ECO:0000255" key="1">
    <source>
        <dbReference type="HAMAP-Rule" id="MF_00531"/>
    </source>
</evidence>
<evidence type="ECO:0000305" key="2"/>
<proteinExistence type="inferred from homology"/>
<organism>
    <name type="scientific">Prochlorococcus marinus (strain MIT 9312)</name>
    <dbReference type="NCBI Taxonomy" id="74546"/>
    <lineage>
        <taxon>Bacteria</taxon>
        <taxon>Bacillati</taxon>
        <taxon>Cyanobacteriota</taxon>
        <taxon>Cyanophyceae</taxon>
        <taxon>Synechococcales</taxon>
        <taxon>Prochlorococcaceae</taxon>
        <taxon>Prochlorococcus</taxon>
    </lineage>
</organism>
<dbReference type="EMBL" id="CP000111">
    <property type="protein sequence ID" value="ABB50707.1"/>
    <property type="molecule type" value="Genomic_DNA"/>
</dbReference>
<dbReference type="RefSeq" id="WP_011377188.1">
    <property type="nucleotide sequence ID" value="NC_007577.1"/>
</dbReference>
<dbReference type="SMR" id="Q318I8"/>
<dbReference type="STRING" id="74546.PMT9312_1646"/>
<dbReference type="KEGG" id="pmi:PMT9312_1646"/>
<dbReference type="eggNOG" id="COG0185">
    <property type="taxonomic scope" value="Bacteria"/>
</dbReference>
<dbReference type="HOGENOM" id="CLU_144911_0_1_3"/>
<dbReference type="OrthoDB" id="9797833at2"/>
<dbReference type="Proteomes" id="UP000002715">
    <property type="component" value="Chromosome"/>
</dbReference>
<dbReference type="GO" id="GO:0005737">
    <property type="term" value="C:cytoplasm"/>
    <property type="evidence" value="ECO:0007669"/>
    <property type="project" value="UniProtKB-ARBA"/>
</dbReference>
<dbReference type="GO" id="GO:0015935">
    <property type="term" value="C:small ribosomal subunit"/>
    <property type="evidence" value="ECO:0007669"/>
    <property type="project" value="InterPro"/>
</dbReference>
<dbReference type="GO" id="GO:0019843">
    <property type="term" value="F:rRNA binding"/>
    <property type="evidence" value="ECO:0007669"/>
    <property type="project" value="UniProtKB-UniRule"/>
</dbReference>
<dbReference type="GO" id="GO:0003735">
    <property type="term" value="F:structural constituent of ribosome"/>
    <property type="evidence" value="ECO:0007669"/>
    <property type="project" value="InterPro"/>
</dbReference>
<dbReference type="GO" id="GO:0000028">
    <property type="term" value="P:ribosomal small subunit assembly"/>
    <property type="evidence" value="ECO:0007669"/>
    <property type="project" value="TreeGrafter"/>
</dbReference>
<dbReference type="GO" id="GO:0006412">
    <property type="term" value="P:translation"/>
    <property type="evidence" value="ECO:0007669"/>
    <property type="project" value="UniProtKB-UniRule"/>
</dbReference>
<dbReference type="FunFam" id="3.30.860.10:FF:000001">
    <property type="entry name" value="30S ribosomal protein S19"/>
    <property type="match status" value="1"/>
</dbReference>
<dbReference type="Gene3D" id="3.30.860.10">
    <property type="entry name" value="30s Ribosomal Protein S19, Chain A"/>
    <property type="match status" value="1"/>
</dbReference>
<dbReference type="HAMAP" id="MF_00531">
    <property type="entry name" value="Ribosomal_uS19"/>
    <property type="match status" value="1"/>
</dbReference>
<dbReference type="InterPro" id="IPR002222">
    <property type="entry name" value="Ribosomal_uS19"/>
</dbReference>
<dbReference type="InterPro" id="IPR005732">
    <property type="entry name" value="Ribosomal_uS19_bac-type"/>
</dbReference>
<dbReference type="InterPro" id="IPR020934">
    <property type="entry name" value="Ribosomal_uS19_CS"/>
</dbReference>
<dbReference type="InterPro" id="IPR023575">
    <property type="entry name" value="Ribosomal_uS19_SF"/>
</dbReference>
<dbReference type="NCBIfam" id="TIGR01050">
    <property type="entry name" value="rpsS_bact"/>
    <property type="match status" value="1"/>
</dbReference>
<dbReference type="PANTHER" id="PTHR11880">
    <property type="entry name" value="RIBOSOMAL PROTEIN S19P FAMILY MEMBER"/>
    <property type="match status" value="1"/>
</dbReference>
<dbReference type="PANTHER" id="PTHR11880:SF8">
    <property type="entry name" value="SMALL RIBOSOMAL SUBUNIT PROTEIN US19M"/>
    <property type="match status" value="1"/>
</dbReference>
<dbReference type="Pfam" id="PF00203">
    <property type="entry name" value="Ribosomal_S19"/>
    <property type="match status" value="1"/>
</dbReference>
<dbReference type="PIRSF" id="PIRSF002144">
    <property type="entry name" value="Ribosomal_S19"/>
    <property type="match status" value="1"/>
</dbReference>
<dbReference type="PRINTS" id="PR00975">
    <property type="entry name" value="RIBOSOMALS19"/>
</dbReference>
<dbReference type="SUPFAM" id="SSF54570">
    <property type="entry name" value="Ribosomal protein S19"/>
    <property type="match status" value="1"/>
</dbReference>
<dbReference type="PROSITE" id="PS00323">
    <property type="entry name" value="RIBOSOMAL_S19"/>
    <property type="match status" value="1"/>
</dbReference>
<accession>Q318I8</accession>
<gene>
    <name evidence="1" type="primary">rpsS</name>
    <name evidence="1" type="synonym">rps19</name>
    <name type="ordered locus">PMT9312_1646</name>
</gene>
<sequence>MGRSLKKGPFIADSLLKKVEKQNTDNDKSVIKTWSRASTILPLMIGHTIAVHNGKTHIPVFITEQMIGHKLGEFAPTRTYRGHIRDKKGAKS</sequence>
<reference key="1">
    <citation type="journal article" date="2006" name="Science">
        <title>Genomic islands and the ecology and evolution of Prochlorococcus.</title>
        <authorList>
            <person name="Coleman M.L."/>
            <person name="Sullivan M.B."/>
            <person name="Martiny A.C."/>
            <person name="Steglich C."/>
            <person name="Barry K."/>
            <person name="Delong E.F."/>
            <person name="Chisholm S.W."/>
        </authorList>
    </citation>
    <scope>NUCLEOTIDE SEQUENCE [LARGE SCALE GENOMIC DNA]</scope>
    <source>
        <strain>MIT 9312</strain>
    </source>
</reference>
<keyword id="KW-0687">Ribonucleoprotein</keyword>
<keyword id="KW-0689">Ribosomal protein</keyword>
<keyword id="KW-0694">RNA-binding</keyword>
<keyword id="KW-0699">rRNA-binding</keyword>
<comment type="function">
    <text evidence="1">Protein S19 forms a complex with S13 that binds strongly to the 16S ribosomal RNA.</text>
</comment>
<comment type="similarity">
    <text evidence="1">Belongs to the universal ribosomal protein uS19 family.</text>
</comment>